<feature type="chain" id="PRO_0000086845" description="Probable serine/threonine-protein kinase zyg-1">
    <location>
        <begin position="1"/>
        <end position="709"/>
    </location>
</feature>
<feature type="domain" description="Protein kinase" evidence="2">
    <location>
        <begin position="13"/>
        <end position="251"/>
    </location>
</feature>
<feature type="region of interest" description="Disordered" evidence="4">
    <location>
        <begin position="254"/>
        <end position="329"/>
    </location>
</feature>
<feature type="region of interest" description="Disordered" evidence="4">
    <location>
        <begin position="591"/>
        <end position="633"/>
    </location>
</feature>
<feature type="compositionally biased region" description="Basic and acidic residues" evidence="4">
    <location>
        <begin position="262"/>
        <end position="291"/>
    </location>
</feature>
<feature type="compositionally biased region" description="Basic and acidic residues" evidence="4">
    <location>
        <begin position="302"/>
        <end position="313"/>
    </location>
</feature>
<feature type="compositionally biased region" description="Polar residues" evidence="4">
    <location>
        <begin position="607"/>
        <end position="627"/>
    </location>
</feature>
<feature type="active site" description="Proton acceptor" evidence="2 3">
    <location>
        <position position="130"/>
    </location>
</feature>
<feature type="binding site" evidence="2">
    <location>
        <begin position="19"/>
        <end position="27"/>
    </location>
    <ligand>
        <name>ATP</name>
        <dbReference type="ChEBI" id="CHEBI:30616"/>
    </ligand>
</feature>
<feature type="binding site" evidence="2">
    <location>
        <position position="41"/>
    </location>
    <ligand>
        <name>ATP</name>
        <dbReference type="ChEBI" id="CHEBI:30616"/>
    </ligand>
</feature>
<organism>
    <name type="scientific">Caenorhabditis briggsae</name>
    <dbReference type="NCBI Taxonomy" id="6238"/>
    <lineage>
        <taxon>Eukaryota</taxon>
        <taxon>Metazoa</taxon>
        <taxon>Ecdysozoa</taxon>
        <taxon>Nematoda</taxon>
        <taxon>Chromadorea</taxon>
        <taxon>Rhabditida</taxon>
        <taxon>Rhabditina</taxon>
        <taxon>Rhabditomorpha</taxon>
        <taxon>Rhabditoidea</taxon>
        <taxon>Rhabditidae</taxon>
        <taxon>Peloderinae</taxon>
        <taxon>Caenorhabditis</taxon>
    </lineage>
</organism>
<protein>
    <recommendedName>
        <fullName>Probable serine/threonine-protein kinase zyg-1</fullName>
        <ecNumber>2.7.11.1</ecNumber>
    </recommendedName>
    <alternativeName>
        <fullName>Zygote defective protein 1</fullName>
    </alternativeName>
</protein>
<proteinExistence type="inferred from homology"/>
<accession>Q621J7</accession>
<accession>A8WU96</accession>
<comment type="function">
    <text evidence="1">Protein kinase that plays a central role in centrosome duplication. Paternal copy is required to regulate synthesis of daughter centrioles prior to fertilization. Maternal copy regulates centrosome duplication during later cell cycles. Functions upstream of sas-5 and sas-6, and is required for their localization to the centrosome (By similarity).</text>
</comment>
<comment type="catalytic activity">
    <reaction>
        <text>L-seryl-[protein] + ATP = O-phospho-L-seryl-[protein] + ADP + H(+)</text>
        <dbReference type="Rhea" id="RHEA:17989"/>
        <dbReference type="Rhea" id="RHEA-COMP:9863"/>
        <dbReference type="Rhea" id="RHEA-COMP:11604"/>
        <dbReference type="ChEBI" id="CHEBI:15378"/>
        <dbReference type="ChEBI" id="CHEBI:29999"/>
        <dbReference type="ChEBI" id="CHEBI:30616"/>
        <dbReference type="ChEBI" id="CHEBI:83421"/>
        <dbReference type="ChEBI" id="CHEBI:456216"/>
        <dbReference type="EC" id="2.7.11.1"/>
    </reaction>
</comment>
<comment type="catalytic activity">
    <reaction>
        <text>L-threonyl-[protein] + ATP = O-phospho-L-threonyl-[protein] + ADP + H(+)</text>
        <dbReference type="Rhea" id="RHEA:46608"/>
        <dbReference type="Rhea" id="RHEA-COMP:11060"/>
        <dbReference type="Rhea" id="RHEA-COMP:11605"/>
        <dbReference type="ChEBI" id="CHEBI:15378"/>
        <dbReference type="ChEBI" id="CHEBI:30013"/>
        <dbReference type="ChEBI" id="CHEBI:30616"/>
        <dbReference type="ChEBI" id="CHEBI:61977"/>
        <dbReference type="ChEBI" id="CHEBI:456216"/>
        <dbReference type="EC" id="2.7.11.1"/>
    </reaction>
</comment>
<comment type="subcellular location">
    <subcellularLocation>
        <location evidence="1">Cytoplasm</location>
        <location evidence="1">Cytoskeleton</location>
        <location evidence="1">Microtubule organizing center</location>
        <location evidence="1">Centrosome</location>
        <location evidence="1">Centriole</location>
    </subcellularLocation>
    <text evidence="1">Component of the centrosome. Present at centrioles only immediately before their duplication (By similarity).</text>
</comment>
<comment type="similarity">
    <text evidence="2">Belongs to the protein kinase superfamily. Ser/Thr protein kinase family.</text>
</comment>
<comment type="caution">
    <text evidence="5">Although it is unknown whether it is a serine/threonine or a tyrosine protein kinase, it is strongly related to serine/threonine-protein kinase family.</text>
</comment>
<dbReference type="EC" id="2.7.11.1"/>
<dbReference type="EMBL" id="HE601438">
    <property type="protein sequence ID" value="CAP24058.1"/>
    <property type="molecule type" value="Genomic_DNA"/>
</dbReference>
<dbReference type="SMR" id="Q621J7"/>
<dbReference type="FunCoup" id="Q621J7">
    <property type="interactions" value="218"/>
</dbReference>
<dbReference type="STRING" id="6238.Q621J7"/>
<dbReference type="EnsemblMetazoa" id="CBG02462.1">
    <property type="protein sequence ID" value="CBG02462.1"/>
    <property type="gene ID" value="WBGene00025510"/>
</dbReference>
<dbReference type="KEGG" id="cbr:CBG_02462"/>
<dbReference type="CTD" id="8572283"/>
<dbReference type="WormBase" id="CBG02462">
    <property type="protein sequence ID" value="CBP14405"/>
    <property type="gene ID" value="WBGene00025510"/>
    <property type="gene designation" value="Cbr-zyg-1"/>
</dbReference>
<dbReference type="eggNOG" id="KOG0032">
    <property type="taxonomic scope" value="Eukaryota"/>
</dbReference>
<dbReference type="HOGENOM" id="CLU_390907_0_0_1"/>
<dbReference type="InParanoid" id="Q621J7"/>
<dbReference type="OMA" id="WPIRMER"/>
<dbReference type="Proteomes" id="UP000008549">
    <property type="component" value="Unassembled WGS sequence"/>
</dbReference>
<dbReference type="GO" id="GO:0005814">
    <property type="term" value="C:centriole"/>
    <property type="evidence" value="ECO:0007669"/>
    <property type="project" value="UniProtKB-SubCell"/>
</dbReference>
<dbReference type="GO" id="GO:0005737">
    <property type="term" value="C:cytoplasm"/>
    <property type="evidence" value="ECO:0007669"/>
    <property type="project" value="UniProtKB-KW"/>
</dbReference>
<dbReference type="GO" id="GO:0005634">
    <property type="term" value="C:nucleus"/>
    <property type="evidence" value="ECO:0000318"/>
    <property type="project" value="GO_Central"/>
</dbReference>
<dbReference type="GO" id="GO:0005524">
    <property type="term" value="F:ATP binding"/>
    <property type="evidence" value="ECO:0007669"/>
    <property type="project" value="UniProtKB-KW"/>
</dbReference>
<dbReference type="GO" id="GO:0106310">
    <property type="term" value="F:protein serine kinase activity"/>
    <property type="evidence" value="ECO:0007669"/>
    <property type="project" value="RHEA"/>
</dbReference>
<dbReference type="GO" id="GO:0004674">
    <property type="term" value="F:protein serine/threonine kinase activity"/>
    <property type="evidence" value="ECO:0007669"/>
    <property type="project" value="UniProtKB-KW"/>
</dbReference>
<dbReference type="FunFam" id="1.10.510.10:FF:001862">
    <property type="entry name" value="Probable serine/threonine-protein kinase zyg-1"/>
    <property type="match status" value="1"/>
</dbReference>
<dbReference type="FunFam" id="3.30.1120.130:FF:000003">
    <property type="entry name" value="Probable serine/threonine-protein kinase zyg-1"/>
    <property type="match status" value="1"/>
</dbReference>
<dbReference type="Gene3D" id="3.30.1120.120">
    <property type="match status" value="1"/>
</dbReference>
<dbReference type="Gene3D" id="3.30.1120.130">
    <property type="match status" value="1"/>
</dbReference>
<dbReference type="Gene3D" id="1.10.510.10">
    <property type="entry name" value="Transferase(Phosphotransferase) domain 1"/>
    <property type="match status" value="1"/>
</dbReference>
<dbReference type="InterPro" id="IPR011009">
    <property type="entry name" value="Kinase-like_dom_sf"/>
</dbReference>
<dbReference type="InterPro" id="IPR047108">
    <property type="entry name" value="Plk4-like_POLO_box_2_sf"/>
</dbReference>
<dbReference type="InterPro" id="IPR000719">
    <property type="entry name" value="Prot_kinase_dom"/>
</dbReference>
<dbReference type="InterPro" id="IPR017441">
    <property type="entry name" value="Protein_kinase_ATP_BS"/>
</dbReference>
<dbReference type="InterPro" id="IPR046437">
    <property type="entry name" value="Ser_Thr-PK_POLO_box_1_sf"/>
</dbReference>
<dbReference type="InterPro" id="IPR008266">
    <property type="entry name" value="Tyr_kinase_AS"/>
</dbReference>
<dbReference type="InterPro" id="IPR040733">
    <property type="entry name" value="Zyg-1_PB1"/>
</dbReference>
<dbReference type="InterPro" id="IPR040734">
    <property type="entry name" value="Zyg-1_PB2"/>
</dbReference>
<dbReference type="PANTHER" id="PTHR24345">
    <property type="entry name" value="SERINE/THREONINE-PROTEIN KINASE PLK"/>
    <property type="match status" value="1"/>
</dbReference>
<dbReference type="PANTHER" id="PTHR24345:SF91">
    <property type="entry name" value="SERINE_THREONINE-PROTEIN KINASE PLK4"/>
    <property type="match status" value="1"/>
</dbReference>
<dbReference type="Pfam" id="PF00069">
    <property type="entry name" value="Pkinase"/>
    <property type="match status" value="1"/>
</dbReference>
<dbReference type="Pfam" id="PF18531">
    <property type="entry name" value="Polo_box_2"/>
    <property type="match status" value="1"/>
</dbReference>
<dbReference type="Pfam" id="PF18544">
    <property type="entry name" value="Polo_box_3"/>
    <property type="match status" value="1"/>
</dbReference>
<dbReference type="SUPFAM" id="SSF56112">
    <property type="entry name" value="Protein kinase-like (PK-like)"/>
    <property type="match status" value="1"/>
</dbReference>
<dbReference type="PROSITE" id="PS00107">
    <property type="entry name" value="PROTEIN_KINASE_ATP"/>
    <property type="match status" value="1"/>
</dbReference>
<dbReference type="PROSITE" id="PS50011">
    <property type="entry name" value="PROTEIN_KINASE_DOM"/>
    <property type="match status" value="1"/>
</dbReference>
<dbReference type="PROSITE" id="PS00109">
    <property type="entry name" value="PROTEIN_KINASE_TYR"/>
    <property type="match status" value="1"/>
</dbReference>
<sequence length="709" mass="79640">MSGGKSGTKLSSFQNLQQIGQGGFGVVYSAQRENGEKVAIKKIGNAASQTRIKEEIKTMKLLRHRNIVQFYETFFENGETYLVMELCEGGSLMDYVKQKGPLDDSTAVHILRQLIAAVKYIHDENILHRDLSAGNVFIKDATKSTITVKLGDFGLATNLGQHGTACTIVGTPGFIAPQVFGQNYDQAADVYSLGAVLYTMLTKHTPPTKGPPNLESLKKRNPSAADLVERMMHTDARRRIQLKEIVMTDYVKAKMGEATPGSREHSRDSRSQRSREPFRSSRDGISLERRPPARSSSQPVNSRRDPDGYRAAHEMPTTSRTSVEPDRARVRHRLSARGIGSSQEDDLRQQIWPIRMERLVGQRVRTPGGRYIVEMNTRCRFEVVSKGNIVLRILVVEYDPHLLIQTVYVHKMSNRVEHARNETDDLIELTRSPISYTSLSQLPKEVMNDYMRLEKMMVSTIASRVAKITHRRPSQFPDASAQLMENGDLRIRFPNSLIVRRKSNGEVHNYIDGFANNKEEVRGLQLSKVREVYACLTQLEQCLSRMNPTMKILPMVFSAGPDIVATYNNSPSSILPSTSSQASRFPFSEISSSQQLVPHSAPIPNKPLSSRTTSSLNVRNGVSSDENTAPAATRQKYKARLDPVTGRIVSVQAEDNRKLRCSTSKPDQFIFTDPSISSSEQRFMRNGRVPERASEMLHALLVYMKKKQN</sequence>
<gene>
    <name type="primary">zyg-1</name>
    <name type="ORF">CBG02462</name>
</gene>
<reference key="1">
    <citation type="journal article" date="2003" name="PLoS Biol.">
        <title>The genome sequence of Caenorhabditis briggsae: a platform for comparative genomics.</title>
        <authorList>
            <person name="Stein L.D."/>
            <person name="Bao Z."/>
            <person name="Blasiar D."/>
            <person name="Blumenthal T."/>
            <person name="Brent M.R."/>
            <person name="Chen N."/>
            <person name="Chinwalla A."/>
            <person name="Clarke L."/>
            <person name="Clee C."/>
            <person name="Coghlan A."/>
            <person name="Coulson A."/>
            <person name="D'Eustachio P."/>
            <person name="Fitch D.H.A."/>
            <person name="Fulton L.A."/>
            <person name="Fulton R.E."/>
            <person name="Griffiths-Jones S."/>
            <person name="Harris T.W."/>
            <person name="Hillier L.W."/>
            <person name="Kamath R."/>
            <person name="Kuwabara P.E."/>
            <person name="Mardis E.R."/>
            <person name="Marra M.A."/>
            <person name="Miner T.L."/>
            <person name="Minx P."/>
            <person name="Mullikin J.C."/>
            <person name="Plumb R.W."/>
            <person name="Rogers J."/>
            <person name="Schein J.E."/>
            <person name="Sohrmann M."/>
            <person name="Spieth J."/>
            <person name="Stajich J.E."/>
            <person name="Wei C."/>
            <person name="Willey D."/>
            <person name="Wilson R.K."/>
            <person name="Durbin R.M."/>
            <person name="Waterston R.H."/>
        </authorList>
    </citation>
    <scope>NUCLEOTIDE SEQUENCE [LARGE SCALE GENOMIC DNA]</scope>
    <source>
        <strain>AF16</strain>
    </source>
</reference>
<keyword id="KW-0067">ATP-binding</keyword>
<keyword id="KW-0131">Cell cycle</keyword>
<keyword id="KW-0963">Cytoplasm</keyword>
<keyword id="KW-0206">Cytoskeleton</keyword>
<keyword id="KW-0217">Developmental protein</keyword>
<keyword id="KW-0418">Kinase</keyword>
<keyword id="KW-0547">Nucleotide-binding</keyword>
<keyword id="KW-1185">Reference proteome</keyword>
<keyword id="KW-0723">Serine/threonine-protein kinase</keyword>
<keyword id="KW-0808">Transferase</keyword>
<name>ZYG1_CAEBR</name>
<evidence type="ECO:0000250" key="1"/>
<evidence type="ECO:0000255" key="2">
    <source>
        <dbReference type="PROSITE-ProRule" id="PRU00159"/>
    </source>
</evidence>
<evidence type="ECO:0000255" key="3">
    <source>
        <dbReference type="PROSITE-ProRule" id="PRU10028"/>
    </source>
</evidence>
<evidence type="ECO:0000256" key="4">
    <source>
        <dbReference type="SAM" id="MobiDB-lite"/>
    </source>
</evidence>
<evidence type="ECO:0000305" key="5"/>